<feature type="chain" id="PRO_0000362701" description="NADH-quinone oxidoreductase subunit A">
    <location>
        <begin position="1"/>
        <end position="119"/>
    </location>
</feature>
<feature type="transmembrane region" description="Helical" evidence="1">
    <location>
        <begin position="9"/>
        <end position="29"/>
    </location>
</feature>
<feature type="transmembrane region" description="Helical" evidence="1">
    <location>
        <begin position="63"/>
        <end position="83"/>
    </location>
</feature>
<feature type="transmembrane region" description="Helical" evidence="1">
    <location>
        <begin position="88"/>
        <end position="108"/>
    </location>
</feature>
<accession>B1Y827</accession>
<gene>
    <name evidence="1" type="primary">nuoA</name>
    <name type="ordered locus">Lcho_1501</name>
</gene>
<comment type="function">
    <text evidence="1">NDH-1 shuttles electrons from NADH, via FMN and iron-sulfur (Fe-S) centers, to quinones in the respiratory chain. The immediate electron acceptor for the enzyme in this species is believed to be ubiquinone. Couples the redox reaction to proton translocation (for every two electrons transferred, four hydrogen ions are translocated across the cytoplasmic membrane), and thus conserves the redox energy in a proton gradient.</text>
</comment>
<comment type="catalytic activity">
    <reaction evidence="1">
        <text>a quinone + NADH + 5 H(+)(in) = a quinol + NAD(+) + 4 H(+)(out)</text>
        <dbReference type="Rhea" id="RHEA:57888"/>
        <dbReference type="ChEBI" id="CHEBI:15378"/>
        <dbReference type="ChEBI" id="CHEBI:24646"/>
        <dbReference type="ChEBI" id="CHEBI:57540"/>
        <dbReference type="ChEBI" id="CHEBI:57945"/>
        <dbReference type="ChEBI" id="CHEBI:132124"/>
    </reaction>
</comment>
<comment type="subunit">
    <text evidence="1">NDH-1 is composed of 14 different subunits. Subunits NuoA, H, J, K, L, M, N constitute the membrane sector of the complex.</text>
</comment>
<comment type="subcellular location">
    <subcellularLocation>
        <location evidence="1">Cell inner membrane</location>
        <topology evidence="1">Multi-pass membrane protein</topology>
    </subcellularLocation>
</comment>
<comment type="similarity">
    <text evidence="1">Belongs to the complex I subunit 3 family.</text>
</comment>
<dbReference type="EC" id="7.1.1.-" evidence="1"/>
<dbReference type="EMBL" id="CP001013">
    <property type="protein sequence ID" value="ACB33769.1"/>
    <property type="molecule type" value="Genomic_DNA"/>
</dbReference>
<dbReference type="RefSeq" id="WP_012346531.1">
    <property type="nucleotide sequence ID" value="NC_010524.1"/>
</dbReference>
<dbReference type="SMR" id="B1Y827"/>
<dbReference type="STRING" id="395495.Lcho_1501"/>
<dbReference type="KEGG" id="lch:Lcho_1501"/>
<dbReference type="eggNOG" id="COG0838">
    <property type="taxonomic scope" value="Bacteria"/>
</dbReference>
<dbReference type="HOGENOM" id="CLU_119549_3_1_4"/>
<dbReference type="OrthoDB" id="9791970at2"/>
<dbReference type="Proteomes" id="UP000001693">
    <property type="component" value="Chromosome"/>
</dbReference>
<dbReference type="GO" id="GO:0030964">
    <property type="term" value="C:NADH dehydrogenase complex"/>
    <property type="evidence" value="ECO:0007669"/>
    <property type="project" value="TreeGrafter"/>
</dbReference>
<dbReference type="GO" id="GO:0005886">
    <property type="term" value="C:plasma membrane"/>
    <property type="evidence" value="ECO:0007669"/>
    <property type="project" value="UniProtKB-SubCell"/>
</dbReference>
<dbReference type="GO" id="GO:0008137">
    <property type="term" value="F:NADH dehydrogenase (ubiquinone) activity"/>
    <property type="evidence" value="ECO:0007669"/>
    <property type="project" value="InterPro"/>
</dbReference>
<dbReference type="GO" id="GO:0050136">
    <property type="term" value="F:NADH:ubiquinone reductase (non-electrogenic) activity"/>
    <property type="evidence" value="ECO:0007669"/>
    <property type="project" value="UniProtKB-UniRule"/>
</dbReference>
<dbReference type="GO" id="GO:0048038">
    <property type="term" value="F:quinone binding"/>
    <property type="evidence" value="ECO:0007669"/>
    <property type="project" value="UniProtKB-KW"/>
</dbReference>
<dbReference type="FunFam" id="1.20.58.1610:FF:000004">
    <property type="entry name" value="NADH-quinone oxidoreductase subunit A"/>
    <property type="match status" value="1"/>
</dbReference>
<dbReference type="Gene3D" id="1.20.58.1610">
    <property type="entry name" value="NADH:ubiquinone/plastoquinone oxidoreductase, chain 3"/>
    <property type="match status" value="1"/>
</dbReference>
<dbReference type="HAMAP" id="MF_01394">
    <property type="entry name" value="NDH1_NuoA"/>
    <property type="match status" value="1"/>
</dbReference>
<dbReference type="InterPro" id="IPR023043">
    <property type="entry name" value="NAD(P)H_OxRDtase_bac/plastid"/>
</dbReference>
<dbReference type="InterPro" id="IPR000440">
    <property type="entry name" value="NADH_UbQ/plastoQ_OxRdtase_su3"/>
</dbReference>
<dbReference type="InterPro" id="IPR038430">
    <property type="entry name" value="NDAH_ubi_oxred_su3_sf"/>
</dbReference>
<dbReference type="PANTHER" id="PTHR11058">
    <property type="entry name" value="NADH-UBIQUINONE OXIDOREDUCTASE CHAIN 3"/>
    <property type="match status" value="1"/>
</dbReference>
<dbReference type="PANTHER" id="PTHR11058:SF9">
    <property type="entry name" value="NADH-UBIQUINONE OXIDOREDUCTASE CHAIN 3"/>
    <property type="match status" value="1"/>
</dbReference>
<dbReference type="Pfam" id="PF00507">
    <property type="entry name" value="Oxidored_q4"/>
    <property type="match status" value="1"/>
</dbReference>
<proteinExistence type="inferred from homology"/>
<protein>
    <recommendedName>
        <fullName evidence="1">NADH-quinone oxidoreductase subunit A</fullName>
        <ecNumber evidence="1">7.1.1.-</ecNumber>
    </recommendedName>
    <alternativeName>
        <fullName evidence="1">NADH dehydrogenase I subunit A</fullName>
    </alternativeName>
    <alternativeName>
        <fullName evidence="1">NDH-1 subunit A</fullName>
    </alternativeName>
    <alternativeName>
        <fullName evidence="1">NUO1</fullName>
    </alternativeName>
</protein>
<reference key="1">
    <citation type="submission" date="2008-03" db="EMBL/GenBank/DDBJ databases">
        <title>Complete sequence of Leptothrix cholodnii SP-6.</title>
        <authorList>
            <consortium name="US DOE Joint Genome Institute"/>
            <person name="Copeland A."/>
            <person name="Lucas S."/>
            <person name="Lapidus A."/>
            <person name="Glavina del Rio T."/>
            <person name="Dalin E."/>
            <person name="Tice H."/>
            <person name="Bruce D."/>
            <person name="Goodwin L."/>
            <person name="Pitluck S."/>
            <person name="Chertkov O."/>
            <person name="Brettin T."/>
            <person name="Detter J.C."/>
            <person name="Han C."/>
            <person name="Kuske C.R."/>
            <person name="Schmutz J."/>
            <person name="Larimer F."/>
            <person name="Land M."/>
            <person name="Hauser L."/>
            <person name="Kyrpides N."/>
            <person name="Lykidis A."/>
            <person name="Emerson D."/>
            <person name="Richardson P."/>
        </authorList>
    </citation>
    <scope>NUCLEOTIDE SEQUENCE [LARGE SCALE GENOMIC DNA]</scope>
    <source>
        <strain>ATCC 51168 / LMG 8142 / SP-6</strain>
    </source>
</reference>
<keyword id="KW-0997">Cell inner membrane</keyword>
<keyword id="KW-1003">Cell membrane</keyword>
<keyword id="KW-0472">Membrane</keyword>
<keyword id="KW-0520">NAD</keyword>
<keyword id="KW-0874">Quinone</keyword>
<keyword id="KW-1185">Reference proteome</keyword>
<keyword id="KW-1278">Translocase</keyword>
<keyword id="KW-0812">Transmembrane</keyword>
<keyword id="KW-1133">Transmembrane helix</keyword>
<keyword id="KW-0813">Transport</keyword>
<keyword id="KW-0830">Ubiquinone</keyword>
<sequence>MNLENYLPVILFILVGVGVGVAPQVLGFLLGPRRPYAAKNSPYECGFEAFEDARMKFDVRYYLVAILFILFDLEIAFLFPWAVSLREIGATGFWAMMIFLGILVVGFVYEWKKGALDWE</sequence>
<organism>
    <name type="scientific">Leptothrix cholodnii (strain ATCC 51168 / LMG 8142 / SP-6)</name>
    <name type="common">Leptothrix discophora (strain SP-6)</name>
    <dbReference type="NCBI Taxonomy" id="395495"/>
    <lineage>
        <taxon>Bacteria</taxon>
        <taxon>Pseudomonadati</taxon>
        <taxon>Pseudomonadota</taxon>
        <taxon>Betaproteobacteria</taxon>
        <taxon>Burkholderiales</taxon>
        <taxon>Sphaerotilaceae</taxon>
        <taxon>Leptothrix</taxon>
    </lineage>
</organism>
<evidence type="ECO:0000255" key="1">
    <source>
        <dbReference type="HAMAP-Rule" id="MF_01394"/>
    </source>
</evidence>
<name>NUOA_LEPCP</name>